<feature type="chain" id="PRO_1000095929" description="N-(5'-phosphoribosyl)anthranilate isomerase">
    <location>
        <begin position="1"/>
        <end position="234"/>
    </location>
</feature>
<feature type="region of interest" description="Disordered" evidence="2">
    <location>
        <begin position="211"/>
        <end position="234"/>
    </location>
</feature>
<organism>
    <name type="scientific">Afipia carboxidovorans (strain ATCC 49405 / DSM 1227 / KCTC 32145 / OM5)</name>
    <name type="common">Oligotropha carboxidovorans</name>
    <dbReference type="NCBI Taxonomy" id="504832"/>
    <lineage>
        <taxon>Bacteria</taxon>
        <taxon>Pseudomonadati</taxon>
        <taxon>Pseudomonadota</taxon>
        <taxon>Alphaproteobacteria</taxon>
        <taxon>Hyphomicrobiales</taxon>
        <taxon>Nitrobacteraceae</taxon>
        <taxon>Afipia</taxon>
    </lineage>
</organism>
<reference key="1">
    <citation type="journal article" date="2008" name="J. Bacteriol.">
        <title>Genome sequence of the chemolithoautotrophic bacterium Oligotropha carboxidovorans OM5T.</title>
        <authorList>
            <person name="Paul D."/>
            <person name="Bridges S."/>
            <person name="Burgess S.C."/>
            <person name="Dandass Y."/>
            <person name="Lawrence M.L."/>
        </authorList>
    </citation>
    <scope>NUCLEOTIDE SEQUENCE [LARGE SCALE GENOMIC DNA]</scope>
    <source>
        <strain>ATCC 49405 / DSM 1227 / KCTC 32145 / OM5</strain>
    </source>
</reference>
<reference key="2">
    <citation type="journal article" date="2011" name="J. Bacteriol.">
        <title>Complete genome sequences of the chemolithoautotrophic Oligotropha carboxidovorans strains OM4 and OM5.</title>
        <authorList>
            <person name="Volland S."/>
            <person name="Rachinger M."/>
            <person name="Strittmatter A."/>
            <person name="Daniel R."/>
            <person name="Gottschalk G."/>
            <person name="Meyer O."/>
        </authorList>
    </citation>
    <scope>NUCLEOTIDE SEQUENCE [LARGE SCALE GENOMIC DNA]</scope>
    <source>
        <strain>ATCC 49405 / DSM 1227 / KCTC 32145 / OM5</strain>
    </source>
</reference>
<protein>
    <recommendedName>
        <fullName evidence="1">N-(5'-phosphoribosyl)anthranilate isomerase</fullName>
        <shortName evidence="1">PRAI</shortName>
        <ecNumber evidence="1">5.3.1.24</ecNumber>
    </recommendedName>
</protein>
<gene>
    <name evidence="1" type="primary">trpF</name>
    <name type="ordered locus">OCAR_4476</name>
    <name type="ordered locus">OCA5_c00580</name>
</gene>
<sequence length="234" mass="24731">MSLIVKICGLSEPETLEAALEAGADMVGLVFFPPSPRNVDLARAAELAARARGRAEIAALTVDADARLLDAIAREVRPDWLQLHGNEPPEAVAALRETYDARVMKAVALATRADLAKVAPYVSVADRILFDARAPKDATRPGGLGVPFDWRILEGADPGLPFVLSGGLHADNLSEALALVRPHGVDVSSGVERTIGVKDADMIRAFIRAARAASSSPRPVDGESPAFQRSEKAG</sequence>
<keyword id="KW-0028">Amino-acid biosynthesis</keyword>
<keyword id="KW-0057">Aromatic amino acid biosynthesis</keyword>
<keyword id="KW-0413">Isomerase</keyword>
<keyword id="KW-1185">Reference proteome</keyword>
<keyword id="KW-0822">Tryptophan biosynthesis</keyword>
<evidence type="ECO:0000255" key="1">
    <source>
        <dbReference type="HAMAP-Rule" id="MF_00135"/>
    </source>
</evidence>
<evidence type="ECO:0000256" key="2">
    <source>
        <dbReference type="SAM" id="MobiDB-lite"/>
    </source>
</evidence>
<dbReference type="EC" id="5.3.1.24" evidence="1"/>
<dbReference type="EMBL" id="CP001196">
    <property type="protein sequence ID" value="ACI91621.1"/>
    <property type="molecule type" value="Genomic_DNA"/>
</dbReference>
<dbReference type="EMBL" id="CP002826">
    <property type="protein sequence ID" value="AEI04792.1"/>
    <property type="molecule type" value="Genomic_DNA"/>
</dbReference>
<dbReference type="RefSeq" id="WP_012561652.1">
    <property type="nucleotide sequence ID" value="NC_015684.1"/>
</dbReference>
<dbReference type="SMR" id="B6JCP1"/>
<dbReference type="STRING" id="504832.OCA5_c00580"/>
<dbReference type="KEGG" id="oca:OCAR_4476"/>
<dbReference type="KEGG" id="ocg:OCA5_c00580"/>
<dbReference type="PATRIC" id="fig|504832.7.peg.61"/>
<dbReference type="eggNOG" id="COG0135">
    <property type="taxonomic scope" value="Bacteria"/>
</dbReference>
<dbReference type="HOGENOM" id="CLU_076364_1_1_5"/>
<dbReference type="OrthoDB" id="9796196at2"/>
<dbReference type="UniPathway" id="UPA00035">
    <property type="reaction ID" value="UER00042"/>
</dbReference>
<dbReference type="Proteomes" id="UP000007730">
    <property type="component" value="Chromosome"/>
</dbReference>
<dbReference type="GO" id="GO:0004640">
    <property type="term" value="F:phosphoribosylanthranilate isomerase activity"/>
    <property type="evidence" value="ECO:0007669"/>
    <property type="project" value="UniProtKB-UniRule"/>
</dbReference>
<dbReference type="GO" id="GO:0000162">
    <property type="term" value="P:L-tryptophan biosynthetic process"/>
    <property type="evidence" value="ECO:0007669"/>
    <property type="project" value="UniProtKB-UniRule"/>
</dbReference>
<dbReference type="CDD" id="cd00405">
    <property type="entry name" value="PRAI"/>
    <property type="match status" value="1"/>
</dbReference>
<dbReference type="Gene3D" id="3.20.20.70">
    <property type="entry name" value="Aldolase class I"/>
    <property type="match status" value="1"/>
</dbReference>
<dbReference type="HAMAP" id="MF_00135">
    <property type="entry name" value="PRAI"/>
    <property type="match status" value="1"/>
</dbReference>
<dbReference type="InterPro" id="IPR013785">
    <property type="entry name" value="Aldolase_TIM"/>
</dbReference>
<dbReference type="InterPro" id="IPR001240">
    <property type="entry name" value="PRAI_dom"/>
</dbReference>
<dbReference type="InterPro" id="IPR011060">
    <property type="entry name" value="RibuloseP-bd_barrel"/>
</dbReference>
<dbReference type="InterPro" id="IPR044643">
    <property type="entry name" value="TrpF_fam"/>
</dbReference>
<dbReference type="NCBIfam" id="NF002295">
    <property type="entry name" value="PRK01222.1-1"/>
    <property type="match status" value="1"/>
</dbReference>
<dbReference type="PANTHER" id="PTHR42894">
    <property type="entry name" value="N-(5'-PHOSPHORIBOSYL)ANTHRANILATE ISOMERASE"/>
    <property type="match status" value="1"/>
</dbReference>
<dbReference type="PANTHER" id="PTHR42894:SF1">
    <property type="entry name" value="N-(5'-PHOSPHORIBOSYL)ANTHRANILATE ISOMERASE"/>
    <property type="match status" value="1"/>
</dbReference>
<dbReference type="Pfam" id="PF00697">
    <property type="entry name" value="PRAI"/>
    <property type="match status" value="1"/>
</dbReference>
<dbReference type="SUPFAM" id="SSF51366">
    <property type="entry name" value="Ribulose-phoshate binding barrel"/>
    <property type="match status" value="1"/>
</dbReference>
<proteinExistence type="inferred from homology"/>
<comment type="catalytic activity">
    <reaction evidence="1">
        <text>N-(5-phospho-beta-D-ribosyl)anthranilate = 1-(2-carboxyphenylamino)-1-deoxy-D-ribulose 5-phosphate</text>
        <dbReference type="Rhea" id="RHEA:21540"/>
        <dbReference type="ChEBI" id="CHEBI:18277"/>
        <dbReference type="ChEBI" id="CHEBI:58613"/>
        <dbReference type="EC" id="5.3.1.24"/>
    </reaction>
</comment>
<comment type="pathway">
    <text evidence="1">Amino-acid biosynthesis; L-tryptophan biosynthesis; L-tryptophan from chorismate: step 3/5.</text>
</comment>
<comment type="similarity">
    <text evidence="1">Belongs to the TrpF family.</text>
</comment>
<accession>B6JCP1</accession>
<accession>F8C093</accession>
<name>TRPF_AFIC5</name>